<evidence type="ECO:0000250" key="1">
    <source>
        <dbReference type="UniProtKB" id="Q2UP89"/>
    </source>
</evidence>
<evidence type="ECO:0000255" key="2"/>
<evidence type="ECO:0000269" key="3">
    <source>
    </source>
</evidence>
<evidence type="ECO:0000269" key="4">
    <source>
    </source>
</evidence>
<evidence type="ECO:0000269" key="5">
    <source>
    </source>
</evidence>
<evidence type="ECO:0000303" key="6">
    <source>
    </source>
</evidence>
<evidence type="ECO:0000305" key="7"/>
<reference key="1">
    <citation type="journal article" date="2002" name="Biochem. J.">
        <title>The Aspergillus niger faeB gene encodes a second feruloyl esterase involved in pectin and xylan degradation and is specifically induced in the presence of aromatic compounds.</title>
        <authorList>
            <person name="de Vries R.P."/>
            <person name="vanKuyk P.A."/>
            <person name="Kester H.C."/>
            <person name="Visser J."/>
        </authorList>
    </citation>
    <scope>NUCLEOTIDE SEQUENCE [GENOMIC DNA]</scope>
    <scope>PROTEIN SEQUENCE OF 18-36 AND 252-267</scope>
    <scope>FUNCTION</scope>
    <scope>SUBCELLULAR LOCATION</scope>
    <scope>INDUCTION</scope>
    <source>
        <strain>ATCC 9029 / NRRL 3 / CBS 120.49 / DSM 2466 / N400 / FGSC 732</strain>
    </source>
</reference>
<reference key="2">
    <citation type="journal article" date="1996" name="Biotechnol. Appl. Biochem.">
        <title>Purification and characterization of a novel esterase induced by growth of Aspergillus niger on sugar-beet pulp.</title>
        <authorList>
            <person name="Kroon P.A."/>
            <person name="Faulds C.B."/>
            <person name="Williamson G."/>
        </authorList>
    </citation>
    <scope>FUNCTION</scope>
    <scope>CATALYTIC ACTIVITY</scope>
    <scope>ACTIVITY REGULATION</scope>
    <scope>SUBUNIT</scope>
    <scope>GLYCOSYLATION</scope>
</reference>
<reference key="3">
    <citation type="journal article" date="1994" name="Carbohydr. Res.">
        <title>Degradation of feruloylated oligosaccharides from sugar-beet pulp and wheat bran by ferulic acid esterases from Aspergillus niger.</title>
        <authorList>
            <person name="Ralet M.C."/>
            <person name="Faulds C.B."/>
            <person name="Williamson G."/>
            <person name="Thibault J.F."/>
        </authorList>
    </citation>
    <scope>FUNCTION</scope>
</reference>
<dbReference type="EC" id="3.1.1.73" evidence="5"/>
<dbReference type="EMBL" id="AJ309807">
    <property type="protein sequence ID" value="CAC83933.1"/>
    <property type="molecule type" value="Genomic_DNA"/>
</dbReference>
<dbReference type="SMR" id="Q8WZI8"/>
<dbReference type="ESTHER" id="aspng-faeb">
    <property type="family name" value="Tannase"/>
</dbReference>
<dbReference type="GlyCosmos" id="Q8WZI8">
    <property type="glycosylation" value="12 sites, No reported glycans"/>
</dbReference>
<dbReference type="PaxDb" id="5061-CADANGAP00010268"/>
<dbReference type="VEuPathDB" id="FungiDB:An12g10390"/>
<dbReference type="VEuPathDB" id="FungiDB:ASPNIDRAFT2_1085850"/>
<dbReference type="VEuPathDB" id="FungiDB:ATCC64974_33570"/>
<dbReference type="VEuPathDB" id="FungiDB:M747DRAFT_340208"/>
<dbReference type="eggNOG" id="ENOG502QPXZ">
    <property type="taxonomic scope" value="Eukaryota"/>
</dbReference>
<dbReference type="BRENDA" id="3.1.1.73">
    <property type="organism ID" value="518"/>
</dbReference>
<dbReference type="GO" id="GO:0005576">
    <property type="term" value="C:extracellular region"/>
    <property type="evidence" value="ECO:0000314"/>
    <property type="project" value="UniProtKB"/>
</dbReference>
<dbReference type="GO" id="GO:0030600">
    <property type="term" value="F:feruloyl esterase activity"/>
    <property type="evidence" value="ECO:0000314"/>
    <property type="project" value="UniProtKB"/>
</dbReference>
<dbReference type="GO" id="GO:0046872">
    <property type="term" value="F:metal ion binding"/>
    <property type="evidence" value="ECO:0007669"/>
    <property type="project" value="UniProtKB-KW"/>
</dbReference>
<dbReference type="GO" id="GO:0016998">
    <property type="term" value="P:cell wall macromolecule catabolic process"/>
    <property type="evidence" value="ECO:0000314"/>
    <property type="project" value="UniProtKB"/>
</dbReference>
<dbReference type="GO" id="GO:0045490">
    <property type="term" value="P:pectin catabolic process"/>
    <property type="evidence" value="ECO:0000314"/>
    <property type="project" value="UniProtKB"/>
</dbReference>
<dbReference type="GO" id="GO:0045493">
    <property type="term" value="P:xylan catabolic process"/>
    <property type="evidence" value="ECO:0000314"/>
    <property type="project" value="UniProtKB"/>
</dbReference>
<dbReference type="Gene3D" id="3.40.50.1820">
    <property type="entry name" value="alpha/beta hydrolase"/>
    <property type="match status" value="1"/>
</dbReference>
<dbReference type="InterPro" id="IPR029058">
    <property type="entry name" value="AB_hydrolase_fold"/>
</dbReference>
<dbReference type="InterPro" id="IPR011118">
    <property type="entry name" value="Tannase/feruloyl_esterase"/>
</dbReference>
<dbReference type="PANTHER" id="PTHR33938">
    <property type="entry name" value="FERULOYL ESTERASE B-RELATED"/>
    <property type="match status" value="1"/>
</dbReference>
<dbReference type="PANTHER" id="PTHR33938:SF15">
    <property type="entry name" value="FERULOYL ESTERASE B-RELATED"/>
    <property type="match status" value="1"/>
</dbReference>
<dbReference type="Pfam" id="PF07519">
    <property type="entry name" value="Tannase"/>
    <property type="match status" value="1"/>
</dbReference>
<dbReference type="SUPFAM" id="SSF53474">
    <property type="entry name" value="alpha/beta-Hydrolases"/>
    <property type="match status" value="1"/>
</dbReference>
<keyword id="KW-0106">Calcium</keyword>
<keyword id="KW-0119">Carbohydrate metabolism</keyword>
<keyword id="KW-0903">Direct protein sequencing</keyword>
<keyword id="KW-1015">Disulfide bond</keyword>
<keyword id="KW-0325">Glycoprotein</keyword>
<keyword id="KW-0378">Hydrolase</keyword>
<keyword id="KW-0479">Metal-binding</keyword>
<keyword id="KW-0624">Polysaccharide degradation</keyword>
<keyword id="KW-0964">Secreted</keyword>
<keyword id="KW-0719">Serine esterase</keyword>
<keyword id="KW-0732">Signal</keyword>
<keyword id="KW-0858">Xylan degradation</keyword>
<name>FAEB_ASPNG</name>
<gene>
    <name type="primary">faeB</name>
</gene>
<accession>Q8WZI8</accession>
<comment type="function">
    <text evidence="3 4">Involved in degradation of plant cell walls. Hydrolyzes of the feruloyl-arabinose ester bond in arabinoxylans as well as the feruloyl-galactose and feruloyl-arabinose ester bonds in pectin.</text>
</comment>
<comment type="catalytic activity">
    <reaction evidence="5">
        <text>feruloyl-polysaccharide + H2O = ferulate + polysaccharide.</text>
        <dbReference type="EC" id="3.1.1.73"/>
    </reaction>
</comment>
<comment type="activity regulation">
    <text evidence="5">Inhibited by the specific serine esterase inhibitor AEBSF.</text>
</comment>
<comment type="subunit">
    <text evidence="5">Homodimer.</text>
</comment>
<comment type="subcellular location">
    <subcellularLocation>
        <location evidence="3">Secreted</location>
    </subcellularLocation>
</comment>
<comment type="induction">
    <text evidence="3">By caffeic acid, p-coumaric acid and to a lesser extent by ferulic acid. Repressed by simple sugars, probably via the carbon catabolite repressor protein CreA.</text>
</comment>
<comment type="PTM">
    <text>Glycosylated.</text>
</comment>
<comment type="similarity">
    <text evidence="7">Belongs to the tannase family.</text>
</comment>
<proteinExistence type="evidence at protein level"/>
<organism>
    <name type="scientific">Aspergillus niger</name>
    <dbReference type="NCBI Taxonomy" id="5061"/>
    <lineage>
        <taxon>Eukaryota</taxon>
        <taxon>Fungi</taxon>
        <taxon>Dikarya</taxon>
        <taxon>Ascomycota</taxon>
        <taxon>Pezizomycotina</taxon>
        <taxon>Eurotiomycetes</taxon>
        <taxon>Eurotiomycetidae</taxon>
        <taxon>Eurotiales</taxon>
        <taxon>Aspergillaceae</taxon>
        <taxon>Aspergillus</taxon>
        <taxon>Aspergillus subgen. Circumdati</taxon>
    </lineage>
</organism>
<protein>
    <recommendedName>
        <fullName>Feruloyl esterase B</fullName>
        <ecNumber evidence="5">3.1.1.73</ecNumber>
    </recommendedName>
    <alternativeName>
        <fullName evidence="6">Cinnamoyl esterase</fullName>
        <shortName>CinnAE</shortName>
    </alternativeName>
    <alternativeName>
        <fullName>FAE-I</fullName>
    </alternativeName>
    <alternativeName>
        <fullName>Ferulic acid esterase B</fullName>
        <shortName>FAEB</shortName>
    </alternativeName>
</protein>
<feature type="signal peptide" evidence="3">
    <location>
        <begin position="1"/>
        <end position="17"/>
    </location>
</feature>
<feature type="chain" id="PRO_0000033586" description="Feruloyl esterase B">
    <location>
        <begin position="18"/>
        <end position="521"/>
    </location>
</feature>
<feature type="active site" description="Acyl-ester intermediate" evidence="1">
    <location>
        <position position="185"/>
    </location>
</feature>
<feature type="active site" description="Charge relay system" evidence="1">
    <location>
        <position position="397"/>
    </location>
</feature>
<feature type="active site" description="Charge relay system" evidence="1">
    <location>
        <position position="437"/>
    </location>
</feature>
<feature type="binding site" evidence="1">
    <location>
        <position position="254"/>
    </location>
    <ligand>
        <name>Ca(2+)</name>
        <dbReference type="ChEBI" id="CHEBI:29108"/>
    </ligand>
</feature>
<feature type="binding site" evidence="1">
    <location>
        <position position="257"/>
    </location>
    <ligand>
        <name>Ca(2+)</name>
        <dbReference type="ChEBI" id="CHEBI:29108"/>
    </ligand>
</feature>
<feature type="binding site" evidence="1">
    <location>
        <position position="259"/>
    </location>
    <ligand>
        <name>Ca(2+)</name>
        <dbReference type="ChEBI" id="CHEBI:29108"/>
    </ligand>
</feature>
<feature type="binding site" evidence="1">
    <location>
        <position position="261"/>
    </location>
    <ligand>
        <name>Ca(2+)</name>
        <dbReference type="ChEBI" id="CHEBI:29108"/>
    </ligand>
</feature>
<feature type="binding site" evidence="1">
    <location>
        <position position="263"/>
    </location>
    <ligand>
        <name>Ca(2+)</name>
        <dbReference type="ChEBI" id="CHEBI:29108"/>
    </ligand>
</feature>
<feature type="glycosylation site" description="N-linked (GlcNAc...) asparagine" evidence="2">
    <location>
        <position position="37"/>
    </location>
</feature>
<feature type="glycosylation site" description="N-linked (GlcNAc...) asparagine" evidence="2">
    <location>
        <position position="51"/>
    </location>
</feature>
<feature type="glycosylation site" description="N-linked (GlcNAc...) asparagine" evidence="2">
    <location>
        <position position="77"/>
    </location>
</feature>
<feature type="glycosylation site" description="N-linked (GlcNAc...) asparagine" evidence="2">
    <location>
        <position position="95"/>
    </location>
</feature>
<feature type="glycosylation site" description="N-linked (GlcNAc...) asparagine" evidence="2">
    <location>
        <position position="144"/>
    </location>
</feature>
<feature type="glycosylation site" description="N-linked (GlcNAc...) asparagine" evidence="2">
    <location>
        <position position="177"/>
    </location>
</feature>
<feature type="glycosylation site" description="N-linked (GlcNAc...) asparagine" evidence="2">
    <location>
        <position position="284"/>
    </location>
</feature>
<feature type="glycosylation site" description="N-linked (GlcNAc...) asparagine" evidence="2">
    <location>
        <position position="347"/>
    </location>
</feature>
<feature type="glycosylation site" description="N-linked (GlcNAc...) asparagine" evidence="2">
    <location>
        <position position="352"/>
    </location>
</feature>
<feature type="glycosylation site" description="N-linked (GlcNAc...) asparagine" evidence="2">
    <location>
        <position position="378"/>
    </location>
</feature>
<feature type="glycosylation site" description="N-linked (GlcNAc...) asparagine" evidence="2">
    <location>
        <position position="488"/>
    </location>
</feature>
<feature type="glycosylation site" description="N-linked (GlcNAc...) asparagine" evidence="2">
    <location>
        <position position="511"/>
    </location>
</feature>
<feature type="disulfide bond" evidence="1">
    <location>
        <begin position="26"/>
        <end position="72"/>
    </location>
</feature>
<feature type="disulfide bond" evidence="1">
    <location>
        <begin position="61"/>
        <end position="111"/>
    </location>
</feature>
<feature type="disulfide bond" evidence="1">
    <location>
        <begin position="184"/>
        <end position="438"/>
    </location>
</feature>
<feature type="disulfide bond" evidence="1">
    <location>
        <begin position="253"/>
        <end position="270"/>
    </location>
</feature>
<feature type="disulfide bond" evidence="1">
    <location>
        <begin position="279"/>
        <end position="288"/>
    </location>
</feature>
<feature type="disulfide bond" evidence="1">
    <location>
        <begin position="498"/>
        <end position="520"/>
    </location>
</feature>
<feature type="sequence conflict" description="In Ref. 1; AA sequence." evidence="7" ref="1">
    <original>C</original>
    <variation>P</variation>
    <location>
        <position position="26"/>
    </location>
</feature>
<sequence length="521" mass="57153">MKVASLLSLALPGAALAATDPFQSRCNEFQNKIDIANVTVRSVAYVAAGQNISQAEVASVCKASVQASVDLCRVTMNISTSDRSHLWAEAWLPRNYTGRFVSTGNGGLAGCVQETDLNFAANFGFATVGTNGGHDGDTAKYFLNNSEVLADFAYRSVHEGTVVGKQLTQLFYDEGYNYSYYLGCSTGGRQGYQQVQRFPDDYDGVIAGSAAMNFINLISWGAFLWKATGLADDPDFISANLWSVIHQEIVRQCDLVDGALDGIIEDPDFCAPVIERLICDGTTNGTSCITGAQAAKVNRALSDFYGPDGTVYYPRLNYGGEADSASLYFTGSMYSRTEEWYKYVVYNDTNWNSSQWTLESAKLALEQNPFNIQAFDPNITAFRDRGGKLLSYHGTQDPIISSTDSKLYYRRVANALNAAPSELDEFYRFFQISGMGHCGDGTGASYIGQGYGTYTSKAPQVNLLRTMVDWVENGKAPEYMPGNKLNANGSIEYMRKHCRYPKHNIHTGPGNYTDPNSWTCV</sequence>